<reference key="1">
    <citation type="journal article" date="2011" name="J. Bacteriol.">
        <title>Comparative genomics of 28 Salmonella enterica isolates: evidence for CRISPR-mediated adaptive sublineage evolution.</title>
        <authorList>
            <person name="Fricke W.F."/>
            <person name="Mammel M.K."/>
            <person name="McDermott P.F."/>
            <person name="Tartera C."/>
            <person name="White D.G."/>
            <person name="Leclerc J.E."/>
            <person name="Ravel J."/>
            <person name="Cebula T.A."/>
        </authorList>
    </citation>
    <scope>NUCLEOTIDE SEQUENCE [LARGE SCALE GENOMIC DNA]</scope>
    <source>
        <strain>SL254</strain>
    </source>
</reference>
<name>GLPG_SALNS</name>
<sequence>MLMITSFANPRVAQAFVDYMATQGVILTIQQHNQSDIWLADESQAERVRGELARFIENPGDPRYLAASWQSGQTNSGLRYRRFPFLATLRERAGPVTWIVMLACVLVYIAMSLIGDQTVMVWLAWPFDPVLKFEVWRYFTHIFMHFSLMHILFNLLWWWYLGGAVEKRLGSGKLIVITVISALLSGYVQQKFSGPWFGGLSGVVYALMGYVWLRGERDPQSGIYLQRGLIIFALLWIVAGWFDWFGMSMANGAHIAGLIVGLAMAFVDTLNARKRT</sequence>
<evidence type="ECO:0000255" key="1">
    <source>
        <dbReference type="HAMAP-Rule" id="MF_01594"/>
    </source>
</evidence>
<evidence type="ECO:0000305" key="2"/>
<comment type="function">
    <text evidence="1">Rhomboid-type serine protease that catalyzes intramembrane proteolysis.</text>
</comment>
<comment type="catalytic activity">
    <reaction evidence="1">
        <text>Cleaves type-1 transmembrane domains using a catalytic dyad composed of serine and histidine that are contributed by different transmembrane domains.</text>
        <dbReference type="EC" id="3.4.21.105"/>
    </reaction>
</comment>
<comment type="subcellular location">
    <subcellularLocation>
        <location evidence="1">Cell inner membrane</location>
        <topology evidence="1">Multi-pass membrane protein</topology>
    </subcellularLocation>
</comment>
<comment type="similarity">
    <text evidence="1">Belongs to the peptidase S54 family.</text>
</comment>
<comment type="sequence caution" evidence="2">
    <conflict type="erroneous initiation">
        <sequence resource="EMBL-CDS" id="ACF61096"/>
    </conflict>
</comment>
<keyword id="KW-0997">Cell inner membrane</keyword>
<keyword id="KW-1003">Cell membrane</keyword>
<keyword id="KW-0378">Hydrolase</keyword>
<keyword id="KW-0472">Membrane</keyword>
<keyword id="KW-0645">Protease</keyword>
<keyword id="KW-0720">Serine protease</keyword>
<keyword id="KW-0812">Transmembrane</keyword>
<keyword id="KW-1133">Transmembrane helix</keyword>
<proteinExistence type="inferred from homology"/>
<dbReference type="EC" id="3.4.21.105" evidence="1"/>
<dbReference type="EMBL" id="CP001113">
    <property type="protein sequence ID" value="ACF61096.1"/>
    <property type="status" value="ALT_INIT"/>
    <property type="molecule type" value="Genomic_DNA"/>
</dbReference>
<dbReference type="RefSeq" id="WP_000928699.1">
    <property type="nucleotide sequence ID" value="NZ_CCMR01000004.1"/>
</dbReference>
<dbReference type="SMR" id="B4SVM1"/>
<dbReference type="MEROPS" id="S54.016"/>
<dbReference type="KEGG" id="see:SNSL254_A3791"/>
<dbReference type="HOGENOM" id="CLU_058989_0_0_6"/>
<dbReference type="Proteomes" id="UP000008824">
    <property type="component" value="Chromosome"/>
</dbReference>
<dbReference type="GO" id="GO:0005886">
    <property type="term" value="C:plasma membrane"/>
    <property type="evidence" value="ECO:0007669"/>
    <property type="project" value="UniProtKB-SubCell"/>
</dbReference>
<dbReference type="GO" id="GO:0004252">
    <property type="term" value="F:serine-type endopeptidase activity"/>
    <property type="evidence" value="ECO:0007669"/>
    <property type="project" value="UniProtKB-UniRule"/>
</dbReference>
<dbReference type="GO" id="GO:0006508">
    <property type="term" value="P:proteolysis"/>
    <property type="evidence" value="ECO:0007669"/>
    <property type="project" value="UniProtKB-UniRule"/>
</dbReference>
<dbReference type="FunFam" id="1.20.1540.10:FF:000003">
    <property type="entry name" value="Rhomboid protease GlpG"/>
    <property type="match status" value="1"/>
</dbReference>
<dbReference type="FunFam" id="3.30.70.2350:FF:000001">
    <property type="entry name" value="Rhomboid protease GlpG"/>
    <property type="match status" value="1"/>
</dbReference>
<dbReference type="Gene3D" id="3.30.70.2350">
    <property type="match status" value="1"/>
</dbReference>
<dbReference type="Gene3D" id="1.20.1540.10">
    <property type="entry name" value="Rhomboid-like"/>
    <property type="match status" value="1"/>
</dbReference>
<dbReference type="HAMAP" id="MF_01594">
    <property type="entry name" value="Rhomboid_GlpG"/>
    <property type="match status" value="1"/>
</dbReference>
<dbReference type="InterPro" id="IPR038236">
    <property type="entry name" value="GlpG_N_sf"/>
</dbReference>
<dbReference type="InterPro" id="IPR022732">
    <property type="entry name" value="Peptidase_S54_GlpG_N"/>
</dbReference>
<dbReference type="InterPro" id="IPR022764">
    <property type="entry name" value="Peptidase_S54_rhomboid_dom"/>
</dbReference>
<dbReference type="InterPro" id="IPR035952">
    <property type="entry name" value="Rhomboid-like_sf"/>
</dbReference>
<dbReference type="InterPro" id="IPR023662">
    <property type="entry name" value="Rhomboid_protease_GlpG"/>
</dbReference>
<dbReference type="NCBIfam" id="NF008155">
    <property type="entry name" value="PRK10907.1"/>
    <property type="match status" value="1"/>
</dbReference>
<dbReference type="NCBIfam" id="TIGR04239">
    <property type="entry name" value="rhombo_GlpG"/>
    <property type="match status" value="1"/>
</dbReference>
<dbReference type="PANTHER" id="PTHR43066:SF26">
    <property type="entry name" value="RHOMBOID PROTEASE GLPG"/>
    <property type="match status" value="1"/>
</dbReference>
<dbReference type="PANTHER" id="PTHR43066">
    <property type="entry name" value="RHOMBOID-RELATED PROTEIN"/>
    <property type="match status" value="1"/>
</dbReference>
<dbReference type="Pfam" id="PF01694">
    <property type="entry name" value="Rhomboid"/>
    <property type="match status" value="1"/>
</dbReference>
<dbReference type="Pfam" id="PF12122">
    <property type="entry name" value="Rhomboid_N"/>
    <property type="match status" value="1"/>
</dbReference>
<dbReference type="SUPFAM" id="SSF144091">
    <property type="entry name" value="Rhomboid-like"/>
    <property type="match status" value="1"/>
</dbReference>
<accession>B4SVM1</accession>
<feature type="chain" id="PRO_0000381769" description="Rhomboid protease GlpG">
    <location>
        <begin position="1"/>
        <end position="276"/>
    </location>
</feature>
<feature type="transmembrane region" description="Helical" evidence="1">
    <location>
        <begin position="94"/>
        <end position="114"/>
    </location>
</feature>
<feature type="transmembrane region" description="Helical" evidence="1">
    <location>
        <begin position="142"/>
        <end position="162"/>
    </location>
</feature>
<feature type="transmembrane region" description="Helical" evidence="1">
    <location>
        <begin position="169"/>
        <end position="189"/>
    </location>
</feature>
<feature type="transmembrane region" description="Helical" evidence="1">
    <location>
        <begin position="192"/>
        <end position="212"/>
    </location>
</feature>
<feature type="transmembrane region" description="Helical" evidence="1">
    <location>
        <begin position="229"/>
        <end position="249"/>
    </location>
</feature>
<feature type="transmembrane region" description="Helical" evidence="1">
    <location>
        <begin position="250"/>
        <end position="270"/>
    </location>
</feature>
<feature type="active site" description="Nucleophile" evidence="1">
    <location>
        <position position="201"/>
    </location>
</feature>
<feature type="active site" evidence="1">
    <location>
        <position position="254"/>
    </location>
</feature>
<protein>
    <recommendedName>
        <fullName evidence="1">Rhomboid protease GlpG</fullName>
        <ecNumber evidence="1">3.4.21.105</ecNumber>
    </recommendedName>
    <alternativeName>
        <fullName evidence="1">Intramembrane serine protease</fullName>
    </alternativeName>
</protein>
<organism>
    <name type="scientific">Salmonella newport (strain SL254)</name>
    <dbReference type="NCBI Taxonomy" id="423368"/>
    <lineage>
        <taxon>Bacteria</taxon>
        <taxon>Pseudomonadati</taxon>
        <taxon>Pseudomonadota</taxon>
        <taxon>Gammaproteobacteria</taxon>
        <taxon>Enterobacterales</taxon>
        <taxon>Enterobacteriaceae</taxon>
        <taxon>Salmonella</taxon>
    </lineage>
</organism>
<gene>
    <name evidence="1" type="primary">glpG</name>
    <name type="ordered locus">SNSL254_A3791</name>
</gene>